<feature type="chain" id="PRO_1000053927" description="Uridylate kinase">
    <location>
        <begin position="1"/>
        <end position="240"/>
    </location>
</feature>
<feature type="region of interest" description="Involved in allosteric activation by GTP" evidence="1">
    <location>
        <begin position="20"/>
        <end position="25"/>
    </location>
</feature>
<feature type="binding site" evidence="1">
    <location>
        <begin position="12"/>
        <end position="15"/>
    </location>
    <ligand>
        <name>ATP</name>
        <dbReference type="ChEBI" id="CHEBI:30616"/>
    </ligand>
</feature>
<feature type="binding site" evidence="1">
    <location>
        <position position="54"/>
    </location>
    <ligand>
        <name>UMP</name>
        <dbReference type="ChEBI" id="CHEBI:57865"/>
    </ligand>
</feature>
<feature type="binding site" evidence="1">
    <location>
        <position position="55"/>
    </location>
    <ligand>
        <name>ATP</name>
        <dbReference type="ChEBI" id="CHEBI:30616"/>
    </ligand>
</feature>
<feature type="binding site" evidence="1">
    <location>
        <position position="59"/>
    </location>
    <ligand>
        <name>ATP</name>
        <dbReference type="ChEBI" id="CHEBI:30616"/>
    </ligand>
</feature>
<feature type="binding site" evidence="1">
    <location>
        <position position="74"/>
    </location>
    <ligand>
        <name>UMP</name>
        <dbReference type="ChEBI" id="CHEBI:57865"/>
    </ligand>
</feature>
<feature type="binding site" evidence="1">
    <location>
        <begin position="135"/>
        <end position="142"/>
    </location>
    <ligand>
        <name>UMP</name>
        <dbReference type="ChEBI" id="CHEBI:57865"/>
    </ligand>
</feature>
<feature type="binding site" evidence="1">
    <location>
        <position position="163"/>
    </location>
    <ligand>
        <name>ATP</name>
        <dbReference type="ChEBI" id="CHEBI:30616"/>
    </ligand>
</feature>
<feature type="binding site" evidence="1">
    <location>
        <position position="169"/>
    </location>
    <ligand>
        <name>ATP</name>
        <dbReference type="ChEBI" id="CHEBI:30616"/>
    </ligand>
</feature>
<feature type="binding site" evidence="1">
    <location>
        <position position="172"/>
    </location>
    <ligand>
        <name>ATP</name>
        <dbReference type="ChEBI" id="CHEBI:30616"/>
    </ligand>
</feature>
<protein>
    <recommendedName>
        <fullName evidence="1">Uridylate kinase</fullName>
        <shortName evidence="1">UK</shortName>
        <ecNumber evidence="1">2.7.4.22</ecNumber>
    </recommendedName>
    <alternativeName>
        <fullName evidence="1">Uridine monophosphate kinase</fullName>
        <shortName evidence="1">UMP kinase</shortName>
        <shortName evidence="1">UMPK</shortName>
    </alternativeName>
</protein>
<dbReference type="EC" id="2.7.4.22" evidence="1"/>
<dbReference type="EMBL" id="BA000043">
    <property type="protein sequence ID" value="BAD75536.1"/>
    <property type="molecule type" value="Genomic_DNA"/>
</dbReference>
<dbReference type="RefSeq" id="WP_011230751.1">
    <property type="nucleotide sequence ID" value="NC_006510.1"/>
</dbReference>
<dbReference type="SMR" id="Q5L0K0"/>
<dbReference type="STRING" id="235909.GK1251"/>
<dbReference type="GeneID" id="32063145"/>
<dbReference type="KEGG" id="gka:GK1251"/>
<dbReference type="eggNOG" id="COG0528">
    <property type="taxonomic scope" value="Bacteria"/>
</dbReference>
<dbReference type="HOGENOM" id="CLU_033861_0_0_9"/>
<dbReference type="UniPathway" id="UPA00159">
    <property type="reaction ID" value="UER00275"/>
</dbReference>
<dbReference type="Proteomes" id="UP000001172">
    <property type="component" value="Chromosome"/>
</dbReference>
<dbReference type="GO" id="GO:0005737">
    <property type="term" value="C:cytoplasm"/>
    <property type="evidence" value="ECO:0007669"/>
    <property type="project" value="UniProtKB-SubCell"/>
</dbReference>
<dbReference type="GO" id="GO:0005524">
    <property type="term" value="F:ATP binding"/>
    <property type="evidence" value="ECO:0007669"/>
    <property type="project" value="UniProtKB-KW"/>
</dbReference>
<dbReference type="GO" id="GO:0033862">
    <property type="term" value="F:UMP kinase activity"/>
    <property type="evidence" value="ECO:0007669"/>
    <property type="project" value="UniProtKB-EC"/>
</dbReference>
<dbReference type="GO" id="GO:0044210">
    <property type="term" value="P:'de novo' CTP biosynthetic process"/>
    <property type="evidence" value="ECO:0007669"/>
    <property type="project" value="UniProtKB-UniRule"/>
</dbReference>
<dbReference type="GO" id="GO:0006225">
    <property type="term" value="P:UDP biosynthetic process"/>
    <property type="evidence" value="ECO:0007669"/>
    <property type="project" value="TreeGrafter"/>
</dbReference>
<dbReference type="CDD" id="cd04254">
    <property type="entry name" value="AAK_UMPK-PyrH-Ec"/>
    <property type="match status" value="1"/>
</dbReference>
<dbReference type="FunFam" id="3.40.1160.10:FF:000001">
    <property type="entry name" value="Uridylate kinase"/>
    <property type="match status" value="1"/>
</dbReference>
<dbReference type="Gene3D" id="3.40.1160.10">
    <property type="entry name" value="Acetylglutamate kinase-like"/>
    <property type="match status" value="1"/>
</dbReference>
<dbReference type="HAMAP" id="MF_01220_B">
    <property type="entry name" value="PyrH_B"/>
    <property type="match status" value="1"/>
</dbReference>
<dbReference type="InterPro" id="IPR036393">
    <property type="entry name" value="AceGlu_kinase-like_sf"/>
</dbReference>
<dbReference type="InterPro" id="IPR001048">
    <property type="entry name" value="Asp/Glu/Uridylate_kinase"/>
</dbReference>
<dbReference type="InterPro" id="IPR011817">
    <property type="entry name" value="Uridylate_kinase"/>
</dbReference>
<dbReference type="InterPro" id="IPR015963">
    <property type="entry name" value="Uridylate_kinase_bac"/>
</dbReference>
<dbReference type="NCBIfam" id="TIGR02075">
    <property type="entry name" value="pyrH_bact"/>
    <property type="match status" value="1"/>
</dbReference>
<dbReference type="PANTHER" id="PTHR42833">
    <property type="entry name" value="URIDYLATE KINASE"/>
    <property type="match status" value="1"/>
</dbReference>
<dbReference type="PANTHER" id="PTHR42833:SF4">
    <property type="entry name" value="URIDYLATE KINASE PUMPKIN, CHLOROPLASTIC"/>
    <property type="match status" value="1"/>
</dbReference>
<dbReference type="Pfam" id="PF00696">
    <property type="entry name" value="AA_kinase"/>
    <property type="match status" value="1"/>
</dbReference>
<dbReference type="PIRSF" id="PIRSF005650">
    <property type="entry name" value="Uridylate_kin"/>
    <property type="match status" value="1"/>
</dbReference>
<dbReference type="SUPFAM" id="SSF53633">
    <property type="entry name" value="Carbamate kinase-like"/>
    <property type="match status" value="1"/>
</dbReference>
<comment type="function">
    <text evidence="1">Catalyzes the reversible phosphorylation of UMP to UDP.</text>
</comment>
<comment type="catalytic activity">
    <reaction evidence="1">
        <text>UMP + ATP = UDP + ADP</text>
        <dbReference type="Rhea" id="RHEA:24400"/>
        <dbReference type="ChEBI" id="CHEBI:30616"/>
        <dbReference type="ChEBI" id="CHEBI:57865"/>
        <dbReference type="ChEBI" id="CHEBI:58223"/>
        <dbReference type="ChEBI" id="CHEBI:456216"/>
        <dbReference type="EC" id="2.7.4.22"/>
    </reaction>
</comment>
<comment type="activity regulation">
    <text evidence="1">Allosterically activated by GTP. Inhibited by UTP.</text>
</comment>
<comment type="pathway">
    <text evidence="1">Pyrimidine metabolism; CTP biosynthesis via de novo pathway; UDP from UMP (UMPK route): step 1/1.</text>
</comment>
<comment type="subunit">
    <text evidence="1">Homohexamer.</text>
</comment>
<comment type="subcellular location">
    <subcellularLocation>
        <location evidence="1">Cytoplasm</location>
    </subcellularLocation>
</comment>
<comment type="similarity">
    <text evidence="1">Belongs to the UMP kinase family.</text>
</comment>
<organism>
    <name type="scientific">Geobacillus kaustophilus (strain HTA426)</name>
    <dbReference type="NCBI Taxonomy" id="235909"/>
    <lineage>
        <taxon>Bacteria</taxon>
        <taxon>Bacillati</taxon>
        <taxon>Bacillota</taxon>
        <taxon>Bacilli</taxon>
        <taxon>Bacillales</taxon>
        <taxon>Anoxybacillaceae</taxon>
        <taxon>Geobacillus</taxon>
        <taxon>Geobacillus thermoleovorans group</taxon>
    </lineage>
</organism>
<evidence type="ECO:0000255" key="1">
    <source>
        <dbReference type="HAMAP-Rule" id="MF_01220"/>
    </source>
</evidence>
<reference key="1">
    <citation type="journal article" date="2004" name="Nucleic Acids Res.">
        <title>Thermoadaptation trait revealed by the genome sequence of thermophilic Geobacillus kaustophilus.</title>
        <authorList>
            <person name="Takami H."/>
            <person name="Takaki Y."/>
            <person name="Chee G.-J."/>
            <person name="Nishi S."/>
            <person name="Shimamura S."/>
            <person name="Suzuki H."/>
            <person name="Matsui S."/>
            <person name="Uchiyama I."/>
        </authorList>
    </citation>
    <scope>NUCLEOTIDE SEQUENCE [LARGE SCALE GENOMIC DNA]</scope>
    <source>
        <strain>HTA426</strain>
    </source>
</reference>
<proteinExistence type="inferred from homology"/>
<gene>
    <name evidence="1" type="primary">pyrH</name>
    <name type="ordered locus">GK1251</name>
</gene>
<name>PYRH_GEOKA</name>
<keyword id="KW-0021">Allosteric enzyme</keyword>
<keyword id="KW-0067">ATP-binding</keyword>
<keyword id="KW-0963">Cytoplasm</keyword>
<keyword id="KW-0418">Kinase</keyword>
<keyword id="KW-0547">Nucleotide-binding</keyword>
<keyword id="KW-0665">Pyrimidine biosynthesis</keyword>
<keyword id="KW-1185">Reference proteome</keyword>
<keyword id="KW-0808">Transferase</keyword>
<accession>Q5L0K0</accession>
<sequence>MEQPKYKRVVLKLSGEALAGKQGFGIQPAVIQSIAKQVKEVVELGVEVAIVVGGGNIWRGKTGSEMGMDRATADYMGMLATVMNALALQDSLEQLGVETRVQTSIEMRQVAEPYIRRRAIRHLEKKRVVIFAAGTGNPYFSTDTTAALRAAEIEADVILMAKNNVDGVYSADPNVDANAVKYDELSYLDVIKQGLGVMDSTASSLCMDNNIPLIVFSIMEEGNIKRAVLGENIGTIVRGK</sequence>